<comment type="function">
    <text evidence="1">Binds to the 23S rRNA.</text>
</comment>
<comment type="subunit">
    <text evidence="1">Part of the 50S ribosomal subunit.</text>
</comment>
<comment type="similarity">
    <text evidence="1">Belongs to the universal ribosomal protein uL15 family.</text>
</comment>
<organism>
    <name type="scientific">Caldicellulosiruptor bescii (strain ATCC BAA-1888 / DSM 6725 / KCTC 15123 / Z-1320)</name>
    <name type="common">Anaerocellum thermophilum</name>
    <dbReference type="NCBI Taxonomy" id="521460"/>
    <lineage>
        <taxon>Bacteria</taxon>
        <taxon>Bacillati</taxon>
        <taxon>Bacillota</taxon>
        <taxon>Bacillota incertae sedis</taxon>
        <taxon>Caldicellulosiruptorales</taxon>
        <taxon>Caldicellulosiruptoraceae</taxon>
        <taxon>Caldicellulosiruptor</taxon>
    </lineage>
</organism>
<proteinExistence type="inferred from homology"/>
<keyword id="KW-0687">Ribonucleoprotein</keyword>
<keyword id="KW-0689">Ribosomal protein</keyword>
<keyword id="KW-0694">RNA-binding</keyword>
<keyword id="KW-0699">rRNA-binding</keyword>
<evidence type="ECO:0000255" key="1">
    <source>
        <dbReference type="HAMAP-Rule" id="MF_01341"/>
    </source>
</evidence>
<evidence type="ECO:0000256" key="2">
    <source>
        <dbReference type="SAM" id="MobiDB-lite"/>
    </source>
</evidence>
<evidence type="ECO:0000305" key="3"/>
<dbReference type="EMBL" id="CP001393">
    <property type="protein sequence ID" value="ACM60821.1"/>
    <property type="molecule type" value="Genomic_DNA"/>
</dbReference>
<dbReference type="RefSeq" id="WP_015908140.1">
    <property type="nucleotide sequence ID" value="NC_012034.1"/>
</dbReference>
<dbReference type="SMR" id="B9MKG3"/>
<dbReference type="STRING" id="521460.Athe_1727"/>
<dbReference type="GeneID" id="31773084"/>
<dbReference type="KEGG" id="ate:Athe_1727"/>
<dbReference type="eggNOG" id="COG0200">
    <property type="taxonomic scope" value="Bacteria"/>
</dbReference>
<dbReference type="HOGENOM" id="CLU_055188_4_2_9"/>
<dbReference type="Proteomes" id="UP000007723">
    <property type="component" value="Chromosome"/>
</dbReference>
<dbReference type="GO" id="GO:0022625">
    <property type="term" value="C:cytosolic large ribosomal subunit"/>
    <property type="evidence" value="ECO:0007669"/>
    <property type="project" value="TreeGrafter"/>
</dbReference>
<dbReference type="GO" id="GO:0019843">
    <property type="term" value="F:rRNA binding"/>
    <property type="evidence" value="ECO:0007669"/>
    <property type="project" value="UniProtKB-UniRule"/>
</dbReference>
<dbReference type="GO" id="GO:0003735">
    <property type="term" value="F:structural constituent of ribosome"/>
    <property type="evidence" value="ECO:0007669"/>
    <property type="project" value="InterPro"/>
</dbReference>
<dbReference type="GO" id="GO:0006412">
    <property type="term" value="P:translation"/>
    <property type="evidence" value="ECO:0007669"/>
    <property type="project" value="UniProtKB-UniRule"/>
</dbReference>
<dbReference type="Gene3D" id="3.100.10.10">
    <property type="match status" value="1"/>
</dbReference>
<dbReference type="HAMAP" id="MF_01341">
    <property type="entry name" value="Ribosomal_uL15"/>
    <property type="match status" value="1"/>
</dbReference>
<dbReference type="InterPro" id="IPR030878">
    <property type="entry name" value="Ribosomal_uL15"/>
</dbReference>
<dbReference type="InterPro" id="IPR021131">
    <property type="entry name" value="Ribosomal_uL15/eL18"/>
</dbReference>
<dbReference type="InterPro" id="IPR036227">
    <property type="entry name" value="Ribosomal_uL15/eL18_sf"/>
</dbReference>
<dbReference type="InterPro" id="IPR005749">
    <property type="entry name" value="Ribosomal_uL15_bac-type"/>
</dbReference>
<dbReference type="InterPro" id="IPR001196">
    <property type="entry name" value="Ribosomal_uL15_CS"/>
</dbReference>
<dbReference type="NCBIfam" id="TIGR01071">
    <property type="entry name" value="rplO_bact"/>
    <property type="match status" value="1"/>
</dbReference>
<dbReference type="PANTHER" id="PTHR12934">
    <property type="entry name" value="50S RIBOSOMAL PROTEIN L15"/>
    <property type="match status" value="1"/>
</dbReference>
<dbReference type="PANTHER" id="PTHR12934:SF11">
    <property type="entry name" value="LARGE RIBOSOMAL SUBUNIT PROTEIN UL15M"/>
    <property type="match status" value="1"/>
</dbReference>
<dbReference type="Pfam" id="PF00828">
    <property type="entry name" value="Ribosomal_L27A"/>
    <property type="match status" value="1"/>
</dbReference>
<dbReference type="SUPFAM" id="SSF52080">
    <property type="entry name" value="Ribosomal proteins L15p and L18e"/>
    <property type="match status" value="1"/>
</dbReference>
<dbReference type="PROSITE" id="PS00475">
    <property type="entry name" value="RIBOSOMAL_L15"/>
    <property type="match status" value="1"/>
</dbReference>
<reference key="1">
    <citation type="submission" date="2009-01" db="EMBL/GenBank/DDBJ databases">
        <title>Complete sequence of chromosome of Caldicellulosiruptor becscii DSM 6725.</title>
        <authorList>
            <person name="Lucas S."/>
            <person name="Copeland A."/>
            <person name="Lapidus A."/>
            <person name="Glavina del Rio T."/>
            <person name="Tice H."/>
            <person name="Bruce D."/>
            <person name="Goodwin L."/>
            <person name="Pitluck S."/>
            <person name="Sims D."/>
            <person name="Meincke L."/>
            <person name="Brettin T."/>
            <person name="Detter J.C."/>
            <person name="Han C."/>
            <person name="Larimer F."/>
            <person name="Land M."/>
            <person name="Hauser L."/>
            <person name="Kyrpides N."/>
            <person name="Ovchinnikova G."/>
            <person name="Kataeva I."/>
            <person name="Adams M.W.W."/>
        </authorList>
    </citation>
    <scope>NUCLEOTIDE SEQUENCE [LARGE SCALE GENOMIC DNA]</scope>
    <source>
        <strain>ATCC BAA-1888 / DSM 6725 / KCTC 15123 / Z-1320</strain>
    </source>
</reference>
<sequence>MKLYELKPAPGSKKNRKRVGRGESSGHGKTSTRGHKGQWARSGGGVRPGFEGGQMPLTRRIPKRGFKNINKKVYTEVNVEKLERFDNDTVITPELLLKERVISKIEKDGVKILGRGELTKRLIVRVQKVSEGARKKIEASGGKVEVI</sequence>
<gene>
    <name evidence="1" type="primary">rplO</name>
    <name type="ordered locus">Athe_1727</name>
</gene>
<name>RL15_CALBD</name>
<accession>B9MKG3</accession>
<protein>
    <recommendedName>
        <fullName evidence="1">Large ribosomal subunit protein uL15</fullName>
    </recommendedName>
    <alternativeName>
        <fullName evidence="3">50S ribosomal protein L15</fullName>
    </alternativeName>
</protein>
<feature type="chain" id="PRO_1000166271" description="Large ribosomal subunit protein uL15">
    <location>
        <begin position="1"/>
        <end position="147"/>
    </location>
</feature>
<feature type="region of interest" description="Disordered" evidence="2">
    <location>
        <begin position="1"/>
        <end position="59"/>
    </location>
</feature>
<feature type="compositionally biased region" description="Gly residues" evidence="2">
    <location>
        <begin position="42"/>
        <end position="52"/>
    </location>
</feature>